<name>WSS2_SCHPO</name>
<keyword id="KW-0002">3D-structure</keyword>
<keyword id="KW-0963">Cytoplasm</keyword>
<keyword id="KW-0227">DNA damage</keyword>
<keyword id="KW-0234">DNA repair</keyword>
<keyword id="KW-0378">Hydrolase</keyword>
<keyword id="KW-0479">Metal-binding</keyword>
<keyword id="KW-0482">Metalloprotease</keyword>
<keyword id="KW-0539">Nucleus</keyword>
<keyword id="KW-0645">Protease</keyword>
<keyword id="KW-1185">Reference proteome</keyword>
<keyword id="KW-0862">Zinc</keyword>
<gene>
    <name evidence="10" type="primary">wss2</name>
    <name evidence="7" type="synonym">wss1b</name>
    <name type="ORF">SPCC1442.07c</name>
</gene>
<feature type="chain" id="PRO_0000350746" description="DNA-dependent metalloprotease WSS1 homolog 2">
    <location>
        <begin position="1"/>
        <end position="282"/>
    </location>
</feature>
<feature type="domain" description="Ubiquitin-like" evidence="2">
    <location>
        <begin position="1"/>
        <end position="75"/>
    </location>
</feature>
<feature type="domain" description="WLM" evidence="3">
    <location>
        <begin position="99"/>
        <end position="274"/>
    </location>
</feature>
<feature type="region of interest" description="Disordered" evidence="5">
    <location>
        <begin position="234"/>
        <end position="282"/>
    </location>
</feature>
<feature type="compositionally biased region" description="Basic and acidic residues" evidence="5">
    <location>
        <begin position="269"/>
        <end position="282"/>
    </location>
</feature>
<feature type="active site" evidence="4">
    <location>
        <position position="203"/>
    </location>
</feature>
<feature type="binding site" evidence="4 9 11 12">
    <location>
        <position position="202"/>
    </location>
    <ligand>
        <name>Zn(2+)</name>
        <dbReference type="ChEBI" id="CHEBI:29105"/>
        <note>catalytic</note>
    </ligand>
</feature>
<feature type="binding site" evidence="4 9 11 12">
    <location>
        <position position="206"/>
    </location>
    <ligand>
        <name>Zn(2+)</name>
        <dbReference type="ChEBI" id="CHEBI:29105"/>
        <note>catalytic</note>
    </ligand>
</feature>
<feature type="binding site" evidence="4 9 11 12">
    <location>
        <position position="212"/>
    </location>
    <ligand>
        <name>Zn(2+)</name>
        <dbReference type="ChEBI" id="CHEBI:29105"/>
        <note>catalytic</note>
    </ligand>
</feature>
<feature type="strand" evidence="13">
    <location>
        <begin position="108"/>
        <end position="115"/>
    </location>
</feature>
<feature type="helix" evidence="13">
    <location>
        <begin position="122"/>
        <end position="134"/>
    </location>
</feature>
<feature type="helix" evidence="13">
    <location>
        <begin position="136"/>
        <end position="145"/>
    </location>
</feature>
<feature type="strand" evidence="13">
    <location>
        <begin position="149"/>
        <end position="155"/>
    </location>
</feature>
<feature type="strand" evidence="13">
    <location>
        <begin position="169"/>
        <end position="172"/>
    </location>
</feature>
<feature type="turn" evidence="13">
    <location>
        <begin position="173"/>
        <end position="176"/>
    </location>
</feature>
<feature type="strand" evidence="13">
    <location>
        <begin position="177"/>
        <end position="181"/>
    </location>
</feature>
<feature type="strand" evidence="13">
    <location>
        <begin position="183"/>
        <end position="188"/>
    </location>
</feature>
<feature type="helix" evidence="13">
    <location>
        <begin position="193"/>
        <end position="205"/>
    </location>
</feature>
<feature type="turn" evidence="13">
    <location>
        <begin position="206"/>
        <end position="208"/>
    </location>
</feature>
<feature type="strand" evidence="13">
    <location>
        <begin position="210"/>
        <end position="213"/>
    </location>
</feature>
<feature type="helix" evidence="13">
    <location>
        <begin position="214"/>
        <end position="227"/>
    </location>
</feature>
<evidence type="ECO:0000250" key="1">
    <source>
        <dbReference type="UniProtKB" id="P38838"/>
    </source>
</evidence>
<evidence type="ECO:0000255" key="2">
    <source>
        <dbReference type="PROSITE-ProRule" id="PRU00214"/>
    </source>
</evidence>
<evidence type="ECO:0000255" key="3">
    <source>
        <dbReference type="PROSITE-ProRule" id="PRU00730"/>
    </source>
</evidence>
<evidence type="ECO:0000255" key="4">
    <source>
        <dbReference type="PROSITE-ProRule" id="PRU10095"/>
    </source>
</evidence>
<evidence type="ECO:0000256" key="5">
    <source>
        <dbReference type="SAM" id="MobiDB-lite"/>
    </source>
</evidence>
<evidence type="ECO:0000269" key="6">
    <source>
    </source>
</evidence>
<evidence type="ECO:0000303" key="7">
    <source>
    </source>
</evidence>
<evidence type="ECO:0000305" key="8"/>
<evidence type="ECO:0000305" key="9">
    <source>
    </source>
</evidence>
<evidence type="ECO:0000312" key="10">
    <source>
        <dbReference type="PomBase" id="SPCC1442.07c"/>
    </source>
</evidence>
<evidence type="ECO:0007744" key="11">
    <source>
        <dbReference type="PDB" id="5JIG"/>
    </source>
</evidence>
<evidence type="ECO:0007744" key="12">
    <source>
        <dbReference type="PDB" id="5LN5"/>
    </source>
</evidence>
<evidence type="ECO:0007829" key="13">
    <source>
        <dbReference type="PDB" id="5JIG"/>
    </source>
</evidence>
<comment type="function">
    <text evidence="1">Metalloendopeptidase that acts selectively on DNA-binding proteins. DNA is needed to bring the protease and substrates together to enable proteolysis. Involved in the repair of toxic DNA-protein cross-links (DPCs) such as covalently trapped topoisomerase 1 (TOP1) adducts on DNA lesions or DPCs induced by reactive compounds such as formaldehyde.</text>
</comment>
<comment type="cofactor">
    <cofactor evidence="9">
        <name>Zn(2+)</name>
        <dbReference type="ChEBI" id="CHEBI:29105"/>
    </cofactor>
</comment>
<comment type="subcellular location">
    <subcellularLocation>
        <location evidence="6">Cytoplasm</location>
    </subcellularLocation>
    <subcellularLocation>
        <location evidence="6">Nucleus</location>
    </subcellularLocation>
</comment>
<comment type="similarity">
    <text evidence="8">Belongs to the peptidase M3 family. WSS1-like metalloprotease (WLM) subfamily.</text>
</comment>
<protein>
    <recommendedName>
        <fullName evidence="8">DNA-dependent metalloprotease WSS1 homolog 2</fullName>
        <ecNumber evidence="1">3.4.24.-</ecNumber>
    </recommendedName>
    <alternativeName>
        <fullName evidence="8">DNA damage response protein WSS1 homolog 2</fullName>
    </alternativeName>
</protein>
<proteinExistence type="evidence at protein level"/>
<organism>
    <name type="scientific">Schizosaccharomyces pombe (strain 972 / ATCC 24843)</name>
    <name type="common">Fission yeast</name>
    <dbReference type="NCBI Taxonomy" id="284812"/>
    <lineage>
        <taxon>Eukaryota</taxon>
        <taxon>Fungi</taxon>
        <taxon>Dikarya</taxon>
        <taxon>Ascomycota</taxon>
        <taxon>Taphrinomycotina</taxon>
        <taxon>Schizosaccharomycetes</taxon>
        <taxon>Schizosaccharomycetales</taxon>
        <taxon>Schizosaccharomycetaceae</taxon>
        <taxon>Schizosaccharomyces</taxon>
    </lineage>
</organism>
<sequence length="282" mass="32464">MELKFSCRGNVIALSFNENDTVLDAKEKLGQEIDVSPSLIKLLYKGNLSDDSHLQDVVKNESKIMCLIRQDKDIVNQAISQLKVPDYSTNTYSLKPKKPHTTPKPASIYTFNELVVLDYPHKDRALRYLERLRDDTGIKKIMDSHRWTVPLLSEMDPAEHTRHDSKTLGLNHNQGAHIELRLRTDRYDGFRDYKTVKSTLIHELTHNVHGEHDSSFWELFRQLTKEADAADLLGKPGSYVSDRASYTPQQDNDDEDQKNHRRDLLLAAAERRKQSGSKVQKE</sequence>
<dbReference type="EC" id="3.4.24.-" evidence="1"/>
<dbReference type="EMBL" id="CU329672">
    <property type="protein sequence ID" value="CAA21441.1"/>
    <property type="molecule type" value="Genomic_DNA"/>
</dbReference>
<dbReference type="PIR" id="T40972">
    <property type="entry name" value="T40972"/>
</dbReference>
<dbReference type="RefSeq" id="NP_588321.1">
    <property type="nucleotide sequence ID" value="NM_001023312.2"/>
</dbReference>
<dbReference type="PDB" id="5JIG">
    <property type="method" value="X-ray"/>
    <property type="resolution" value="1.00 A"/>
    <property type="chains" value="A=107-232"/>
</dbReference>
<dbReference type="PDB" id="5LN5">
    <property type="method" value="X-ray"/>
    <property type="resolution" value="1.75 A"/>
    <property type="chains" value="A/B=107-233"/>
</dbReference>
<dbReference type="PDBsum" id="5JIG"/>
<dbReference type="PDBsum" id="5LN5"/>
<dbReference type="SMR" id="O94580"/>
<dbReference type="BioGRID" id="275334">
    <property type="interactions" value="9"/>
</dbReference>
<dbReference type="STRING" id="284812.O94580"/>
<dbReference type="MEROPS" id="M80.A04"/>
<dbReference type="iPTMnet" id="O94580"/>
<dbReference type="PaxDb" id="4896-SPCC1442.07c.1"/>
<dbReference type="EnsemblFungi" id="SPCC1442.07c.1">
    <property type="protein sequence ID" value="SPCC1442.07c.1:pep"/>
    <property type="gene ID" value="SPCC1442.07c"/>
</dbReference>
<dbReference type="GeneID" id="2538751"/>
<dbReference type="KEGG" id="spo:2538751"/>
<dbReference type="PomBase" id="SPCC1442.07c">
    <property type="gene designation" value="wss2"/>
</dbReference>
<dbReference type="VEuPathDB" id="FungiDB:SPCC1442.07c"/>
<dbReference type="eggNOG" id="KOG4842">
    <property type="taxonomic scope" value="Eukaryota"/>
</dbReference>
<dbReference type="HOGENOM" id="CLU_056790_0_0_1"/>
<dbReference type="InParanoid" id="O94580"/>
<dbReference type="OMA" id="GIQRIMN"/>
<dbReference type="PhylomeDB" id="O94580"/>
<dbReference type="PRO" id="PR:O94580"/>
<dbReference type="Proteomes" id="UP000002485">
    <property type="component" value="Chromosome III"/>
</dbReference>
<dbReference type="GO" id="GO:0005829">
    <property type="term" value="C:cytosol"/>
    <property type="evidence" value="ECO:0007005"/>
    <property type="project" value="PomBase"/>
</dbReference>
<dbReference type="GO" id="GO:0005634">
    <property type="term" value="C:nucleus"/>
    <property type="evidence" value="ECO:0007005"/>
    <property type="project" value="PomBase"/>
</dbReference>
<dbReference type="GO" id="GO:0003690">
    <property type="term" value="F:double-stranded DNA binding"/>
    <property type="evidence" value="ECO:0000314"/>
    <property type="project" value="PomBase"/>
</dbReference>
<dbReference type="GO" id="GO:0008237">
    <property type="term" value="F:metallopeptidase activity"/>
    <property type="evidence" value="ECO:0000314"/>
    <property type="project" value="PomBase"/>
</dbReference>
<dbReference type="GO" id="GO:0070628">
    <property type="term" value="F:proteasome binding"/>
    <property type="evidence" value="ECO:0000353"/>
    <property type="project" value="PomBase"/>
</dbReference>
<dbReference type="GO" id="GO:0003697">
    <property type="term" value="F:single-stranded DNA binding"/>
    <property type="evidence" value="ECO:0000314"/>
    <property type="project" value="PomBase"/>
</dbReference>
<dbReference type="GO" id="GO:0046914">
    <property type="term" value="F:transition metal ion binding"/>
    <property type="evidence" value="ECO:0000314"/>
    <property type="project" value="PomBase"/>
</dbReference>
<dbReference type="GO" id="GO:0008270">
    <property type="term" value="F:zinc ion binding"/>
    <property type="evidence" value="ECO:0000255"/>
    <property type="project" value="PomBase"/>
</dbReference>
<dbReference type="GO" id="GO:0006281">
    <property type="term" value="P:DNA repair"/>
    <property type="evidence" value="ECO:0000314"/>
    <property type="project" value="PomBase"/>
</dbReference>
<dbReference type="GO" id="GO:0016925">
    <property type="term" value="P:protein sumoylation"/>
    <property type="evidence" value="ECO:0000266"/>
    <property type="project" value="PomBase"/>
</dbReference>
<dbReference type="GO" id="GO:0006508">
    <property type="term" value="P:proteolysis"/>
    <property type="evidence" value="ECO:0007669"/>
    <property type="project" value="UniProtKB-KW"/>
</dbReference>
<dbReference type="Gene3D" id="3.10.20.90">
    <property type="entry name" value="Phosphatidylinositol 3-kinase Catalytic Subunit, Chain A, domain 1"/>
    <property type="match status" value="1"/>
</dbReference>
<dbReference type="InterPro" id="IPR000626">
    <property type="entry name" value="Ubiquitin-like_dom"/>
</dbReference>
<dbReference type="InterPro" id="IPR029071">
    <property type="entry name" value="Ubiquitin-like_domsf"/>
</dbReference>
<dbReference type="InterPro" id="IPR013536">
    <property type="entry name" value="WLM_dom"/>
</dbReference>
<dbReference type="PANTHER" id="PTHR47795:SF1">
    <property type="entry name" value="DNA-DEPENDENT METALLOPROTEASE WSS1 HOMOLOG 2"/>
    <property type="match status" value="1"/>
</dbReference>
<dbReference type="PANTHER" id="PTHR47795">
    <property type="entry name" value="UBIQUITIN AND WLM DOMAIN-CONTAINING METALLOPROTEASE SPCC1442.07C"/>
    <property type="match status" value="1"/>
</dbReference>
<dbReference type="Pfam" id="PF00240">
    <property type="entry name" value="ubiquitin"/>
    <property type="match status" value="1"/>
</dbReference>
<dbReference type="Pfam" id="PF08325">
    <property type="entry name" value="WLM"/>
    <property type="match status" value="1"/>
</dbReference>
<dbReference type="SMART" id="SM00213">
    <property type="entry name" value="UBQ"/>
    <property type="match status" value="1"/>
</dbReference>
<dbReference type="SUPFAM" id="SSF54236">
    <property type="entry name" value="Ubiquitin-like"/>
    <property type="match status" value="1"/>
</dbReference>
<dbReference type="PROSITE" id="PS50053">
    <property type="entry name" value="UBIQUITIN_2"/>
    <property type="match status" value="1"/>
</dbReference>
<dbReference type="PROSITE" id="PS51397">
    <property type="entry name" value="WLM"/>
    <property type="match status" value="1"/>
</dbReference>
<dbReference type="PROSITE" id="PS00142">
    <property type="entry name" value="ZINC_PROTEASE"/>
    <property type="match status" value="1"/>
</dbReference>
<reference key="1">
    <citation type="journal article" date="2002" name="Nature">
        <title>The genome sequence of Schizosaccharomyces pombe.</title>
        <authorList>
            <person name="Wood V."/>
            <person name="Gwilliam R."/>
            <person name="Rajandream M.A."/>
            <person name="Lyne M.H."/>
            <person name="Lyne R."/>
            <person name="Stewart A."/>
            <person name="Sgouros J.G."/>
            <person name="Peat N."/>
            <person name="Hayles J."/>
            <person name="Baker S.G."/>
            <person name="Basham D."/>
            <person name="Bowman S."/>
            <person name="Brooks K."/>
            <person name="Brown D."/>
            <person name="Brown S."/>
            <person name="Chillingworth T."/>
            <person name="Churcher C.M."/>
            <person name="Collins M."/>
            <person name="Connor R."/>
            <person name="Cronin A."/>
            <person name="Davis P."/>
            <person name="Feltwell T."/>
            <person name="Fraser A."/>
            <person name="Gentles S."/>
            <person name="Goble A."/>
            <person name="Hamlin N."/>
            <person name="Harris D.E."/>
            <person name="Hidalgo J."/>
            <person name="Hodgson G."/>
            <person name="Holroyd S."/>
            <person name="Hornsby T."/>
            <person name="Howarth S."/>
            <person name="Huckle E.J."/>
            <person name="Hunt S."/>
            <person name="Jagels K."/>
            <person name="James K.D."/>
            <person name="Jones L."/>
            <person name="Jones M."/>
            <person name="Leather S."/>
            <person name="McDonald S."/>
            <person name="McLean J."/>
            <person name="Mooney P."/>
            <person name="Moule S."/>
            <person name="Mungall K.L."/>
            <person name="Murphy L.D."/>
            <person name="Niblett D."/>
            <person name="Odell C."/>
            <person name="Oliver K."/>
            <person name="O'Neil S."/>
            <person name="Pearson D."/>
            <person name="Quail M.A."/>
            <person name="Rabbinowitsch E."/>
            <person name="Rutherford K.M."/>
            <person name="Rutter S."/>
            <person name="Saunders D."/>
            <person name="Seeger K."/>
            <person name="Sharp S."/>
            <person name="Skelton J."/>
            <person name="Simmonds M.N."/>
            <person name="Squares R."/>
            <person name="Squares S."/>
            <person name="Stevens K."/>
            <person name="Taylor K."/>
            <person name="Taylor R.G."/>
            <person name="Tivey A."/>
            <person name="Walsh S.V."/>
            <person name="Warren T."/>
            <person name="Whitehead S."/>
            <person name="Woodward J.R."/>
            <person name="Volckaert G."/>
            <person name="Aert R."/>
            <person name="Robben J."/>
            <person name="Grymonprez B."/>
            <person name="Weltjens I."/>
            <person name="Vanstreels E."/>
            <person name="Rieger M."/>
            <person name="Schaefer M."/>
            <person name="Mueller-Auer S."/>
            <person name="Gabel C."/>
            <person name="Fuchs M."/>
            <person name="Duesterhoeft A."/>
            <person name="Fritzc C."/>
            <person name="Holzer E."/>
            <person name="Moestl D."/>
            <person name="Hilbert H."/>
            <person name="Borzym K."/>
            <person name="Langer I."/>
            <person name="Beck A."/>
            <person name="Lehrach H."/>
            <person name="Reinhardt R."/>
            <person name="Pohl T.M."/>
            <person name="Eger P."/>
            <person name="Zimmermann W."/>
            <person name="Wedler H."/>
            <person name="Wambutt R."/>
            <person name="Purnelle B."/>
            <person name="Goffeau A."/>
            <person name="Cadieu E."/>
            <person name="Dreano S."/>
            <person name="Gloux S."/>
            <person name="Lelaure V."/>
            <person name="Mottier S."/>
            <person name="Galibert F."/>
            <person name="Aves S.J."/>
            <person name="Xiang Z."/>
            <person name="Hunt C."/>
            <person name="Moore K."/>
            <person name="Hurst S.M."/>
            <person name="Lucas M."/>
            <person name="Rochet M."/>
            <person name="Gaillardin C."/>
            <person name="Tallada V.A."/>
            <person name="Garzon A."/>
            <person name="Thode G."/>
            <person name="Daga R.R."/>
            <person name="Cruzado L."/>
            <person name="Jimenez J."/>
            <person name="Sanchez M."/>
            <person name="del Rey F."/>
            <person name="Benito J."/>
            <person name="Dominguez A."/>
            <person name="Revuelta J.L."/>
            <person name="Moreno S."/>
            <person name="Armstrong J."/>
            <person name="Forsburg S.L."/>
            <person name="Cerutti L."/>
            <person name="Lowe T."/>
            <person name="McCombie W.R."/>
            <person name="Paulsen I."/>
            <person name="Potashkin J."/>
            <person name="Shpakovski G.V."/>
            <person name="Ussery D."/>
            <person name="Barrell B.G."/>
            <person name="Nurse P."/>
        </authorList>
    </citation>
    <scope>NUCLEOTIDE SEQUENCE [LARGE SCALE GENOMIC DNA]</scope>
    <source>
        <strain>972 / ATCC 24843</strain>
    </source>
</reference>
<reference key="2">
    <citation type="journal article" date="2006" name="Nat. Biotechnol.">
        <title>ORFeome cloning and global analysis of protein localization in the fission yeast Schizosaccharomyces pombe.</title>
        <authorList>
            <person name="Matsuyama A."/>
            <person name="Arai R."/>
            <person name="Yashiroda Y."/>
            <person name="Shirai A."/>
            <person name="Kamata A."/>
            <person name="Sekido S."/>
            <person name="Kobayashi Y."/>
            <person name="Hashimoto A."/>
            <person name="Hamamoto M."/>
            <person name="Hiraoka Y."/>
            <person name="Horinouchi S."/>
            <person name="Yoshida M."/>
        </authorList>
    </citation>
    <scope>SUBCELLULAR LOCATION [LARGE SCALE ANALYSIS]</scope>
</reference>
<reference evidence="11 12" key="3">
    <citation type="journal article" date="2016" name="Mol. Cell">
        <title>Mechanism and regulation of DNA-protein crosslink repair by the DNA-dependent metalloprotease SPRTN.</title>
        <authorList>
            <person name="Stingele J."/>
            <person name="Bellelli R."/>
            <person name="Alte F."/>
            <person name="Hewitt G."/>
            <person name="Sarek G."/>
            <person name="Maslen S.L."/>
            <person name="Tsutakawa S.E."/>
            <person name="Borg A."/>
            <person name="Kjaer S."/>
            <person name="Tainer J.A."/>
            <person name="Skehel J.M."/>
            <person name="Groll M."/>
            <person name="Boulton S.J."/>
        </authorList>
    </citation>
    <scope>X-RAY CRYSTALLOGRAPHY (1.00 ANGSTROMS) OF 106-232 IN COMPLEX WITH NICKEL</scope>
</reference>
<accession>O94580</accession>